<proteinExistence type="evidence at protein level"/>
<comment type="function">
    <text evidence="2 4 8 9">Catalyzes the reversible conversion of 2-phosphoglycerate (2-PG) into phosphoenolpyruvate (PEP) (PubMed:27569900, PubMed:37385399, PubMed:37860976). It is essential for the degradation of carbohydrates via glycolysis.</text>
</comment>
<comment type="function">
    <text evidence="4 7 8">'Moonlights' as a plasminogen receptor. Protein purifed from E.coli binds immobilized host (human) plasminogen with a dissociation constant of 360 nM; 0.1 M lysine prevents plasminogen binding (PubMed:27569900). Protein purifed from M.tuberculosis H37Ra binds immobilized host plasminogen with a dissociation constant of 398 nM, in the same paper protein purified from E.coli binds with a dissociation constant of 888 nM (PubMed:37385399). Overexpression (in strain H37Ra) leads to increased biofilm formation; dithiothreitol (DTT, which causes thiol reductive stress and induces biofilm formation) increases biofilm formation further (PubMed:37385399). Unlike E.coli and B.subtilis, the RNA degradosome in M.tuberculosis does not include enolase (PubMed:30957850).</text>
</comment>
<comment type="catalytic activity">
    <reaction evidence="2 4 8">
        <text>(2R)-2-phosphoglycerate = phosphoenolpyruvate + H2O</text>
        <dbReference type="Rhea" id="RHEA:10164"/>
        <dbReference type="ChEBI" id="CHEBI:15377"/>
        <dbReference type="ChEBI" id="CHEBI:58289"/>
        <dbReference type="ChEBI" id="CHEBI:58702"/>
        <dbReference type="EC" id="4.2.1.11"/>
    </reaction>
    <physiologicalReaction direction="left-to-right" evidence="8">
        <dbReference type="Rhea" id="RHEA:10165"/>
    </physiologicalReaction>
    <physiologicalReaction direction="right-to-left" evidence="4 9">
        <dbReference type="Rhea" id="RHEA:10166"/>
    </physiologicalReaction>
</comment>
<comment type="cofactor">
    <cofactor evidence="2 8 9">
        <name>Mg(2+)</name>
        <dbReference type="ChEBI" id="CHEBI:18420"/>
    </cofactor>
    <text evidence="9">In the absence of substrate binds Mg(2+)-A ion; during catalysis temporarily binds a second Mg(2+)-B (PubMed:37860976).</text>
</comment>
<comment type="activity regulation">
    <text evidence="1 8">Enzyme activity and biofilm formation are inhibited by NaF (PubMed:37385399). The covalent binding to the substrate causes inactivation of the enzyme, and possibly serves as a signal for the export of the protein (By similarity).</text>
</comment>
<comment type="biophysicochemical properties">
    <kinetics>
        <KM evidence="4">416 uM for phosphoenolpyruvate (expression in E.coli)</KM>
        <KM evidence="8">418 uM for (2R)-2-phosphoglycerate (expression in M.tuberculosis H37Ra)</KM>
        <KM evidence="8">155 uM for (2R)-2-phosphoglycerate (expression in E.coli)</KM>
        <KM evidence="9">498 uM for phosphoenolpyruvate (homooctomer purified from M.smegmatis)</KM>
        <Vmax evidence="4">323.0 umol/min/mg enzyme (expression in E.coli)</Vmax>
    </kinetics>
    <phDependence>
        <text evidence="8">Optimum pH is 7.5 (expression in M.tuberculosis H37Ra).</text>
    </phDependence>
</comment>
<comment type="pathway">
    <text evidence="2">Carbohydrate degradation; glycolysis; pyruvate from D-glyceraldehyde 3-phosphate: step 4/5.</text>
</comment>
<comment type="subunit">
    <text evidence="8 9">Homotetramer (expression in M.tuberculosis H37Ra) (PubMed:37385399). Homodimer and homooctomer (expression in M.smegmatis); homooctomers were active while homodimers were not (PubMed:37860976).</text>
</comment>
<comment type="subcellular location">
    <subcellularLocation>
        <location evidence="2">Cytoplasm</location>
    </subcellularLocation>
    <subcellularLocation>
        <location evidence="2 8">Secreted</location>
    </subcellularLocation>
    <subcellularLocation>
        <location evidence="2 4">Cell surface</location>
    </subcellularLocation>
    <text evidence="4 8">Fractions of enolase are present in both the cytoplasm and on the cell surface (PubMed:27569900, PubMed:37385399). Detected by antisera of human patients infected with tuberculosis (PubMed:27569900).</text>
</comment>
<comment type="domain">
    <text evidence="9 11">Binding of the forward (2-PG) and reverse (PEP) substrates occurs to largely overlapping sites (PubMed:37860976). Binds (2R)-2-phosphoglycerate (2-PG) in two alternate conformations, the second of which has fewer interactions with the protein, which may facilitate its release from the active site (PubMed:37860976).</text>
</comment>
<comment type="PTM">
    <text evidence="8">The modified residues annotated below were detected in protein expressed in M.tuberculosis H37Ra; different modifications are seen when the protein is expressed in E.coli, which are not annotated in this entry (PubMed:37385399).</text>
</comment>
<comment type="disruption phenotype">
    <text evidence="3 5">Essential (PubMed:14569030). Disruption confers a growth defect (PubMed:28096490).</text>
</comment>
<comment type="miscellaneous">
    <text evidence="6 11">Probably binds 2-aminothiazole antibiotics, which are antitubercular agents (Probable) (PubMed:30416491). Overexpression (in strain H37Rv) leads to increased resistance to 2-aminothiazole antibiotics (2-AT), antitubercular agents (PubMed:30416491). Reduction of expression (in strain Erdman) leads to increased sensitivity to 2-ATs (PubMed:30416491). This protein may be a possible drug target (Probable) (PubMed:30416491).</text>
</comment>
<comment type="miscellaneous">
    <text evidence="4 10">Pathogens have evolved a strategy to activate host plasminogen and manipulate plasmin activity for their benefit; plasminogen binding (even without its activation to plasmin) increases their adherence to host cells. Plasmin activity leads to degradation of host extracellular matrix proteins like collagen, fibronectin and laminin, facilitating bacterial dissemination and disease spread (Probable). Enolase 'moonlights' as a plasminogen-binding protein (PubMed:27569900). Vaccinating mice with recombinant enolase provides substantial protection against subsequent M.tuberculosis infection (PubMed:27569900). Enolase is not the only M.tuberculosis protein that binds plasminogen (PubMed:27569900).</text>
</comment>
<comment type="similarity">
    <text evidence="2">Belongs to the enolase family.</text>
</comment>
<comment type="caution">
    <text evidence="8">Protein purified from M.tuberculosis H37Ra has different kinetic properties and post-translational modifications than protein purified from E.coli (PubMed:37385399).</text>
</comment>
<protein>
    <recommendedName>
        <fullName evidence="2">Enolase</fullName>
        <ecNumber evidence="2 4 9">4.2.1.11</ecNumber>
    </recommendedName>
    <alternativeName>
        <fullName evidence="2">2-phospho-D-glycerate hydro-lyase</fullName>
    </alternativeName>
    <alternativeName>
        <fullName evidence="2">2-phosphoglycerate dehydratase</fullName>
    </alternativeName>
</protein>
<feature type="chain" id="PRO_0000133932" description="Enolase">
    <location>
        <begin position="1"/>
        <end position="429"/>
    </location>
</feature>
<feature type="active site" description="Proton donor" evidence="2 13">
    <location>
        <position position="204"/>
    </location>
</feature>
<feature type="active site" description="Proton acceptor" evidence="2 13">
    <location>
        <position position="335"/>
    </location>
</feature>
<feature type="binding site" evidence="9 22 24 25">
    <location>
        <position position="41"/>
    </location>
    <ligand>
        <name>(2R)-2-phosphoglycerate</name>
        <dbReference type="ChEBI" id="CHEBI:58289"/>
    </ligand>
</feature>
<feature type="binding site" evidence="9 24 25">
    <location>
        <position position="42"/>
    </location>
    <ligand>
        <name>(2R)-2-phosphoglycerate</name>
        <dbReference type="ChEBI" id="CHEBI:58289"/>
    </ligand>
</feature>
<feature type="binding site" evidence="9 25">
    <location>
        <position position="42"/>
    </location>
    <ligand>
        <name>Mg(2+)</name>
        <dbReference type="ChEBI" id="CHEBI:18420"/>
        <label>B</label>
    </ligand>
</feature>
<feature type="binding site" evidence="9 27">
    <location>
        <position position="42"/>
    </location>
    <ligand>
        <name>phosphoenolpyruvate</name>
        <dbReference type="ChEBI" id="CHEBI:58702"/>
    </ligand>
</feature>
<feature type="binding site" evidence="2 9 24 25">
    <location>
        <position position="162"/>
    </location>
    <ligand>
        <name>(2R)-2-phosphoglycerate</name>
        <dbReference type="ChEBI" id="CHEBI:58289"/>
    </ligand>
</feature>
<feature type="binding site" evidence="9 27">
    <location>
        <position position="162"/>
    </location>
    <ligand>
        <name>phosphoenolpyruvate</name>
        <dbReference type="ChEBI" id="CHEBI:58702"/>
    </ligand>
</feature>
<feature type="binding site" evidence="9 25">
    <location>
        <position position="163"/>
    </location>
    <ligand>
        <name>(2R)-2-phosphoglycerate</name>
        <dbReference type="ChEBI" id="CHEBI:58289"/>
    </ligand>
</feature>
<feature type="binding site" evidence="9 25">
    <location>
        <position position="204"/>
    </location>
    <ligand>
        <name>(2R)-2-phosphoglycerate</name>
        <dbReference type="ChEBI" id="CHEBI:58289"/>
    </ligand>
</feature>
<feature type="binding site" evidence="2 9 22 23 24 25 26 27">
    <location>
        <position position="241"/>
    </location>
    <ligand>
        <name>Mg(2+)</name>
        <dbReference type="ChEBI" id="CHEBI:18420"/>
        <label>A</label>
    </ligand>
</feature>
<feature type="binding site" evidence="2 9 23">
    <location>
        <position position="283"/>
    </location>
    <ligand>
        <name>Mg(2+)</name>
        <dbReference type="ChEBI" id="CHEBI:18420"/>
        <label>A</label>
    </ligand>
</feature>
<feature type="binding site" evidence="9 24">
    <location>
        <position position="310"/>
    </location>
    <ligand>
        <name>(2R)-2-phosphoglycerate</name>
        <dbReference type="ChEBI" id="CHEBI:58289"/>
    </ligand>
</feature>
<feature type="binding site" evidence="2 9 22 23 24 25 26 27">
    <location>
        <position position="310"/>
    </location>
    <ligand>
        <name>Mg(2+)</name>
        <dbReference type="ChEBI" id="CHEBI:18420"/>
        <label>A</label>
    </ligand>
</feature>
<feature type="binding site" evidence="9 24">
    <location>
        <position position="311"/>
    </location>
    <ligand>
        <name>(2R)-2-phosphoglycerate</name>
        <dbReference type="ChEBI" id="CHEBI:58289"/>
    </ligand>
</feature>
<feature type="binding site" evidence="2 9 22 24 25">
    <location>
        <position position="335"/>
    </location>
    <ligand>
        <name>(2R)-2-phosphoglycerate</name>
        <dbReference type="ChEBI" id="CHEBI:58289"/>
    </ligand>
</feature>
<feature type="binding site" evidence="9 26 27">
    <location>
        <position position="335"/>
    </location>
    <ligand>
        <name>phosphoenolpyruvate</name>
        <dbReference type="ChEBI" id="CHEBI:58702"/>
    </ligand>
</feature>
<feature type="binding site" evidence="2 9 22 24 25">
    <location>
        <position position="364"/>
    </location>
    <ligand>
        <name>(2R)-2-phosphoglycerate</name>
        <dbReference type="ChEBI" id="CHEBI:58289"/>
    </ligand>
</feature>
<feature type="binding site" evidence="9 26 27">
    <location>
        <position position="364"/>
    </location>
    <ligand>
        <name>phosphoenolpyruvate</name>
        <dbReference type="ChEBI" id="CHEBI:58702"/>
    </ligand>
</feature>
<feature type="binding site" evidence="2 9 22 24 25">
    <location>
        <position position="365"/>
    </location>
    <ligand>
        <name>(2R)-2-phosphoglycerate</name>
        <dbReference type="ChEBI" id="CHEBI:58289"/>
    </ligand>
</feature>
<feature type="binding site" evidence="9 26 27">
    <location>
        <position position="365"/>
    </location>
    <ligand>
        <name>phosphoenolpyruvate</name>
        <dbReference type="ChEBI" id="CHEBI:58702"/>
    </ligand>
</feature>
<feature type="binding site" evidence="2 9 22 25">
    <location>
        <position position="386"/>
    </location>
    <ligand>
        <name>(2R)-2-phosphoglycerate</name>
        <dbReference type="ChEBI" id="CHEBI:58289"/>
    </ligand>
</feature>
<feature type="binding site" evidence="9 26 27">
    <location>
        <position position="386"/>
    </location>
    <ligand>
        <name>phosphoenolpyruvate</name>
        <dbReference type="ChEBI" id="CHEBI:58702"/>
    </ligand>
</feature>
<feature type="modified residue" description="Glutamate methyl ester (Glu)" evidence="12">
    <location>
        <position position="45"/>
    </location>
</feature>
<feature type="modified residue" description="Glutamate methyl ester (Glu)" evidence="12">
    <location>
        <position position="47"/>
    </location>
</feature>
<feature type="modified residue" description="Glutamate methyl ester (Glu)" evidence="12">
    <location>
        <position position="50"/>
    </location>
</feature>
<feature type="modified residue" description="Aspartate methyl ester" evidence="12">
    <location>
        <position position="72"/>
    </location>
</feature>
<feature type="modified residue" description="Glutamate methyl ester (Glu)" evidence="12">
    <location>
        <position position="73"/>
    </location>
</feature>
<feature type="modified residue" description="Aspartate methyl ester" evidence="12">
    <location>
        <position position="90"/>
    </location>
</feature>
<feature type="modified residue" description="N6-acetyllysine" evidence="12">
    <location>
        <position position="102"/>
    </location>
</feature>
<feature type="modified residue" description="Aspartate methyl ester" evidence="12">
    <location>
        <position position="123"/>
    </location>
</feature>
<feature type="modified residue" description="Glutamate methyl ester (Glu)" evidence="12">
    <location>
        <position position="126"/>
    </location>
</feature>
<feature type="modified residue" description="Glutamate methyl ester (Glu)" evidence="12">
    <location>
        <position position="195"/>
    </location>
</feature>
<feature type="modified residue" description="Phosphoserine" evidence="12">
    <location>
        <position position="198"/>
    </location>
</feature>
<feature type="modified residue" description="Phosphothreonine" evidence="12">
    <location>
        <position position="199"/>
    </location>
</feature>
<feature type="modified residue" description="Aspartate methyl ester" evidence="12">
    <location>
        <position position="203"/>
    </location>
</feature>
<feature type="modified residue" description="Glutamate methyl ester (Glu)" evidence="12">
    <location>
        <position position="204"/>
    </location>
</feature>
<feature type="modified residue" description="Aspartate methyl ester" evidence="12">
    <location>
        <position position="210"/>
    </location>
</feature>
<feature type="modified residue" description="Phosphothreonine" evidence="12">
    <location>
        <position position="341"/>
    </location>
</feature>
<feature type="modified residue" description="Glutamate methyl ester (Glu)" evidence="12">
    <location>
        <position position="367"/>
    </location>
</feature>
<feature type="modified residue" description="Glutamate methyl ester (Glu)" evidence="12">
    <location>
        <position position="369"/>
    </location>
</feature>
<feature type="modified residue" description="Aspartate methyl ester" evidence="12">
    <location>
        <position position="370"/>
    </location>
</feature>
<feature type="modified residue" description="Aspartate methyl ester" evidence="12">
    <location>
        <position position="375"/>
    </location>
</feature>
<feature type="modified residue" description="Glutamate methyl ester (Glu)" evidence="12">
    <location>
        <position position="406"/>
    </location>
</feature>
<feature type="modified residue" description="Glutamate methyl ester (Glu)" evidence="12">
    <location>
        <position position="407"/>
    </location>
</feature>
<feature type="mutagenesis site" description="About 5% 2-PG product made." evidence="9">
    <original>S</original>
    <variation>A</variation>
    <location>
        <position position="42"/>
    </location>
</feature>
<feature type="mutagenesis site" description="No 2-PG made." evidence="9">
    <original>E</original>
    <variation>A</variation>
    <location>
        <position position="163"/>
    </location>
</feature>
<feature type="mutagenesis site" description="No 2-PG made." evidence="9">
    <original>E</original>
    <variation>A</variation>
    <location>
        <position position="204"/>
    </location>
</feature>
<feature type="mutagenesis site" description="No 2-PG made." evidence="9">
    <original>D</original>
    <variation>A</variation>
    <location>
        <position position="241"/>
    </location>
</feature>
<feature type="mutagenesis site" description="No 2-PG made." evidence="9">
    <original>K</original>
    <variation>A</variation>
    <location>
        <position position="335"/>
    </location>
</feature>
<feature type="mutagenesis site" description="Reduced binding of host plasminogen, dissociation constant increases about 2-fold to 882 nM." evidence="4">
    <original>K</original>
    <variation>A</variation>
    <location>
        <position position="429"/>
    </location>
</feature>
<feature type="strand" evidence="29">
    <location>
        <begin position="3"/>
        <end position="13"/>
    </location>
</feature>
<feature type="strand" evidence="29">
    <location>
        <begin position="19"/>
        <end position="27"/>
    </location>
</feature>
<feature type="strand" evidence="29">
    <location>
        <begin position="32"/>
        <end position="36"/>
    </location>
</feature>
<feature type="strand" evidence="30">
    <location>
        <begin position="45"/>
        <end position="47"/>
    </location>
</feature>
<feature type="helix" evidence="29">
    <location>
        <begin position="57"/>
        <end position="60"/>
    </location>
</feature>
<feature type="helix" evidence="29">
    <location>
        <begin position="64"/>
        <end position="72"/>
    </location>
</feature>
<feature type="helix" evidence="29">
    <location>
        <begin position="74"/>
        <end position="78"/>
    </location>
</feature>
<feature type="helix" evidence="29">
    <location>
        <begin position="86"/>
        <end position="97"/>
    </location>
</feature>
<feature type="strand" evidence="28">
    <location>
        <begin position="99"/>
        <end position="101"/>
    </location>
</feature>
<feature type="turn" evidence="29">
    <location>
        <begin position="103"/>
        <end position="105"/>
    </location>
</feature>
<feature type="helix" evidence="29">
    <location>
        <begin position="107"/>
        <end position="124"/>
    </location>
</feature>
<feature type="helix" evidence="29">
    <location>
        <begin position="129"/>
        <end position="134"/>
    </location>
</feature>
<feature type="strand" evidence="29">
    <location>
        <begin position="146"/>
        <end position="150"/>
    </location>
</feature>
<feature type="helix" evidence="29">
    <location>
        <begin position="152"/>
        <end position="154"/>
    </location>
</feature>
<feature type="strand" evidence="29">
    <location>
        <begin position="155"/>
        <end position="158"/>
    </location>
</feature>
<feature type="strand" evidence="29">
    <location>
        <begin position="161"/>
        <end position="167"/>
    </location>
</feature>
<feature type="helix" evidence="29">
    <location>
        <begin position="174"/>
        <end position="194"/>
    </location>
</feature>
<feature type="strand" evidence="29">
    <location>
        <begin position="205"/>
        <end position="207"/>
    </location>
</feature>
<feature type="helix" evidence="29">
    <location>
        <begin position="214"/>
        <end position="227"/>
    </location>
</feature>
<feature type="turn" evidence="29">
    <location>
        <begin position="233"/>
        <end position="235"/>
    </location>
</feature>
<feature type="strand" evidence="29">
    <location>
        <begin position="236"/>
        <end position="241"/>
    </location>
</feature>
<feature type="helix" evidence="29">
    <location>
        <begin position="244"/>
        <end position="247"/>
    </location>
</feature>
<feature type="turn" evidence="29">
    <location>
        <begin position="250"/>
        <end position="252"/>
    </location>
</feature>
<feature type="strand" evidence="29">
    <location>
        <begin position="253"/>
        <end position="255"/>
    </location>
</feature>
<feature type="strand" evidence="29">
    <location>
        <begin position="257"/>
        <end position="261"/>
    </location>
</feature>
<feature type="helix" evidence="29">
    <location>
        <begin position="263"/>
        <end position="276"/>
    </location>
</feature>
<feature type="strand" evidence="29">
    <location>
        <begin position="279"/>
        <end position="283"/>
    </location>
</feature>
<feature type="helix" evidence="29">
    <location>
        <begin position="291"/>
        <end position="301"/>
    </location>
</feature>
<feature type="turn" evidence="29">
    <location>
        <begin position="302"/>
        <end position="304"/>
    </location>
</feature>
<feature type="strand" evidence="29">
    <location>
        <begin position="305"/>
        <end position="310"/>
    </location>
</feature>
<feature type="turn" evidence="29">
    <location>
        <begin position="311"/>
        <end position="315"/>
    </location>
</feature>
<feature type="helix" evidence="29">
    <location>
        <begin position="317"/>
        <end position="325"/>
    </location>
</feature>
<feature type="strand" evidence="29">
    <location>
        <begin position="330"/>
        <end position="334"/>
    </location>
</feature>
<feature type="helix" evidence="29">
    <location>
        <begin position="336"/>
        <end position="339"/>
    </location>
</feature>
<feature type="helix" evidence="29">
    <location>
        <begin position="342"/>
        <end position="354"/>
    </location>
</feature>
<feature type="strand" evidence="29">
    <location>
        <begin position="358"/>
        <end position="362"/>
    </location>
</feature>
<feature type="helix" evidence="29">
    <location>
        <begin position="372"/>
        <end position="380"/>
    </location>
</feature>
<feature type="strand" evidence="29">
    <location>
        <begin position="383"/>
        <end position="386"/>
    </location>
</feature>
<feature type="helix" evidence="29">
    <location>
        <begin position="393"/>
        <end position="409"/>
    </location>
</feature>
<feature type="helix" evidence="29">
    <location>
        <begin position="410"/>
        <end position="412"/>
    </location>
</feature>
<feature type="helix" evidence="29">
    <location>
        <begin position="417"/>
        <end position="420"/>
    </location>
</feature>
<gene>
    <name evidence="2" type="primary">eno</name>
    <name type="ordered locus">Rv1023</name>
    <name type="ORF">MTCY10G2.26c</name>
</gene>
<name>ENO_MYCTU</name>
<sequence>MPIIEQVRAREILDSRGNPTVEVEVALIDGTFARAAVPSGASTGEHEAVELRDGGDRYGGKGVQKAVQAVLDEIGPAVIGLNADDQRLVDQALVDLDGTPDKSRLGGNAILGVSLAVAKAAADSAELPLFRYVGGPNAHILPVPMMNILNGGAHADTAVDIQEFMVAPIGAPSFVEALRWGAEVYHALKSVLKKEGLSTGLGDEGGFAPDVAGTTAALDLISRAIESAGLRPGADVALALDAAATEFFTDGTGYVFEGTTRTADQMTEFYAGLLGAYPLVSIEDPLSEDDWDGWAALTASIGDRVQIVGDDIFVTNPERLEEGIERGVANALLVKVNQIGTLTETLDAVTLAHHGGYRTMISHRSGETEDTMIADLAVAIGSGQIKTGAPARSERVAKYNQLLRIEEALGDAARYAGDLAFPRFACETK</sequence>
<accession>P9WNL1</accession>
<accession>L0T876</accession>
<accession>P96377</accession>
<keyword id="KW-0002">3D-structure</keyword>
<keyword id="KW-0007">Acetylation</keyword>
<keyword id="KW-0963">Cytoplasm</keyword>
<keyword id="KW-0324">Glycolysis</keyword>
<keyword id="KW-0456">Lyase</keyword>
<keyword id="KW-0460">Magnesium</keyword>
<keyword id="KW-0479">Metal-binding</keyword>
<keyword id="KW-0488">Methylation</keyword>
<keyword id="KW-0597">Phosphoprotein</keyword>
<keyword id="KW-1185">Reference proteome</keyword>
<keyword id="KW-0964">Secreted</keyword>
<dbReference type="EC" id="4.2.1.11" evidence="2 4 9"/>
<dbReference type="EMBL" id="AL123456">
    <property type="protein sequence ID" value="CCP43773.1"/>
    <property type="molecule type" value="Genomic_DNA"/>
</dbReference>
<dbReference type="PIR" id="B70623">
    <property type="entry name" value="B70623"/>
</dbReference>
<dbReference type="RefSeq" id="NP_215539.1">
    <property type="nucleotide sequence ID" value="NC_000962.3"/>
</dbReference>
<dbReference type="RefSeq" id="WP_003898693.1">
    <property type="nucleotide sequence ID" value="NZ_NVQJ01000018.1"/>
</dbReference>
<dbReference type="PDB" id="6L7D">
    <property type="method" value="X-ray"/>
    <property type="resolution" value="3.00 A"/>
    <property type="chains" value="A=1-429"/>
</dbReference>
<dbReference type="PDB" id="7CKP">
    <property type="method" value="X-ray"/>
    <property type="resolution" value="2.90 A"/>
    <property type="chains" value="A=1-428"/>
</dbReference>
<dbReference type="PDB" id="7CLK">
    <property type="method" value="X-ray"/>
    <property type="resolution" value="2.15 A"/>
    <property type="chains" value="A=1-429"/>
</dbReference>
<dbReference type="PDB" id="7CLL">
    <property type="method" value="X-ray"/>
    <property type="resolution" value="1.99 A"/>
    <property type="chains" value="A/B/C/D=1-429"/>
</dbReference>
<dbReference type="PDB" id="7DLR">
    <property type="method" value="X-ray"/>
    <property type="resolution" value="2.25 A"/>
    <property type="chains" value="A=1-429"/>
</dbReference>
<dbReference type="PDB" id="7E4F">
    <property type="method" value="X-ray"/>
    <property type="resolution" value="2.30 A"/>
    <property type="chains" value="A=1-429"/>
</dbReference>
<dbReference type="PDB" id="7E4X">
    <property type="method" value="EM"/>
    <property type="resolution" value="3.08 A"/>
    <property type="chains" value="A/B/C/D/E/F/G/H=1-429"/>
</dbReference>
<dbReference type="PDB" id="7E51">
    <property type="method" value="EM"/>
    <property type="resolution" value="3.23 A"/>
    <property type="chains" value="A/B/C/D/E/F/G/H=1-429"/>
</dbReference>
<dbReference type="PDBsum" id="6L7D"/>
<dbReference type="PDBsum" id="7CKP"/>
<dbReference type="PDBsum" id="7CLK"/>
<dbReference type="PDBsum" id="7CLL"/>
<dbReference type="PDBsum" id="7DLR"/>
<dbReference type="PDBsum" id="7E4F"/>
<dbReference type="PDBsum" id="7E4X"/>
<dbReference type="PDBsum" id="7E51"/>
<dbReference type="SMR" id="P9WNL1"/>
<dbReference type="FunCoup" id="P9WNL1">
    <property type="interactions" value="477"/>
</dbReference>
<dbReference type="STRING" id="83332.Rv1023"/>
<dbReference type="PaxDb" id="83332-Rv1023"/>
<dbReference type="DNASU" id="886062"/>
<dbReference type="GeneID" id="886062"/>
<dbReference type="KEGG" id="mtu:Rv1023"/>
<dbReference type="KEGG" id="mtv:RVBD_1023"/>
<dbReference type="TubercuList" id="Rv1023"/>
<dbReference type="eggNOG" id="COG4948">
    <property type="taxonomic scope" value="Bacteria"/>
</dbReference>
<dbReference type="InParanoid" id="P9WNL1"/>
<dbReference type="OrthoDB" id="9804716at2"/>
<dbReference type="PhylomeDB" id="P9WNL1"/>
<dbReference type="UniPathway" id="UPA00109">
    <property type="reaction ID" value="UER00187"/>
</dbReference>
<dbReference type="Proteomes" id="UP000001584">
    <property type="component" value="Chromosome"/>
</dbReference>
<dbReference type="GO" id="GO:0009986">
    <property type="term" value="C:cell surface"/>
    <property type="evidence" value="ECO:0007669"/>
    <property type="project" value="UniProtKB-SubCell"/>
</dbReference>
<dbReference type="GO" id="GO:0005576">
    <property type="term" value="C:extracellular region"/>
    <property type="evidence" value="ECO:0007669"/>
    <property type="project" value="UniProtKB-SubCell"/>
</dbReference>
<dbReference type="GO" id="GO:0009274">
    <property type="term" value="C:peptidoglycan-based cell wall"/>
    <property type="evidence" value="ECO:0007005"/>
    <property type="project" value="MTBBASE"/>
</dbReference>
<dbReference type="GO" id="GO:0000015">
    <property type="term" value="C:phosphopyruvate hydratase complex"/>
    <property type="evidence" value="ECO:0000318"/>
    <property type="project" value="GO_Central"/>
</dbReference>
<dbReference type="GO" id="GO:0005886">
    <property type="term" value="C:plasma membrane"/>
    <property type="evidence" value="ECO:0007005"/>
    <property type="project" value="MTBBASE"/>
</dbReference>
<dbReference type="GO" id="GO:0000287">
    <property type="term" value="F:magnesium ion binding"/>
    <property type="evidence" value="ECO:0007669"/>
    <property type="project" value="UniProtKB-UniRule"/>
</dbReference>
<dbReference type="GO" id="GO:0004634">
    <property type="term" value="F:phosphopyruvate hydratase activity"/>
    <property type="evidence" value="ECO:0000318"/>
    <property type="project" value="GO_Central"/>
</dbReference>
<dbReference type="GO" id="GO:0006096">
    <property type="term" value="P:glycolytic process"/>
    <property type="evidence" value="ECO:0000318"/>
    <property type="project" value="GO_Central"/>
</dbReference>
<dbReference type="CDD" id="cd03313">
    <property type="entry name" value="enolase"/>
    <property type="match status" value="1"/>
</dbReference>
<dbReference type="FunFam" id="3.20.20.120:FF:000001">
    <property type="entry name" value="Enolase"/>
    <property type="match status" value="1"/>
</dbReference>
<dbReference type="FunFam" id="3.30.390.10:FF:000001">
    <property type="entry name" value="Enolase"/>
    <property type="match status" value="1"/>
</dbReference>
<dbReference type="Gene3D" id="3.20.20.120">
    <property type="entry name" value="Enolase-like C-terminal domain"/>
    <property type="match status" value="1"/>
</dbReference>
<dbReference type="Gene3D" id="3.30.390.10">
    <property type="entry name" value="Enolase-like, N-terminal domain"/>
    <property type="match status" value="1"/>
</dbReference>
<dbReference type="HAMAP" id="MF_00318">
    <property type="entry name" value="Enolase"/>
    <property type="match status" value="1"/>
</dbReference>
<dbReference type="InterPro" id="IPR000941">
    <property type="entry name" value="Enolase"/>
</dbReference>
<dbReference type="InterPro" id="IPR036849">
    <property type="entry name" value="Enolase-like_C_sf"/>
</dbReference>
<dbReference type="InterPro" id="IPR029017">
    <property type="entry name" value="Enolase-like_N"/>
</dbReference>
<dbReference type="InterPro" id="IPR020810">
    <property type="entry name" value="Enolase_C"/>
</dbReference>
<dbReference type="InterPro" id="IPR020809">
    <property type="entry name" value="Enolase_CS"/>
</dbReference>
<dbReference type="InterPro" id="IPR020811">
    <property type="entry name" value="Enolase_N"/>
</dbReference>
<dbReference type="NCBIfam" id="TIGR01060">
    <property type="entry name" value="eno"/>
    <property type="match status" value="1"/>
</dbReference>
<dbReference type="PANTHER" id="PTHR11902">
    <property type="entry name" value="ENOLASE"/>
    <property type="match status" value="1"/>
</dbReference>
<dbReference type="PANTHER" id="PTHR11902:SF1">
    <property type="entry name" value="ENOLASE"/>
    <property type="match status" value="1"/>
</dbReference>
<dbReference type="Pfam" id="PF00113">
    <property type="entry name" value="Enolase_C"/>
    <property type="match status" value="1"/>
</dbReference>
<dbReference type="Pfam" id="PF03952">
    <property type="entry name" value="Enolase_N"/>
    <property type="match status" value="1"/>
</dbReference>
<dbReference type="PIRSF" id="PIRSF001400">
    <property type="entry name" value="Enolase"/>
    <property type="match status" value="1"/>
</dbReference>
<dbReference type="PRINTS" id="PR00148">
    <property type="entry name" value="ENOLASE"/>
</dbReference>
<dbReference type="SFLD" id="SFLDS00001">
    <property type="entry name" value="Enolase"/>
    <property type="match status" value="1"/>
</dbReference>
<dbReference type="SFLD" id="SFLDF00002">
    <property type="entry name" value="enolase"/>
    <property type="match status" value="1"/>
</dbReference>
<dbReference type="SMART" id="SM01192">
    <property type="entry name" value="Enolase_C"/>
    <property type="match status" value="1"/>
</dbReference>
<dbReference type="SMART" id="SM01193">
    <property type="entry name" value="Enolase_N"/>
    <property type="match status" value="1"/>
</dbReference>
<dbReference type="SUPFAM" id="SSF51604">
    <property type="entry name" value="Enolase C-terminal domain-like"/>
    <property type="match status" value="1"/>
</dbReference>
<dbReference type="SUPFAM" id="SSF54826">
    <property type="entry name" value="Enolase N-terminal domain-like"/>
    <property type="match status" value="1"/>
</dbReference>
<dbReference type="PROSITE" id="PS00164">
    <property type="entry name" value="ENOLASE"/>
    <property type="match status" value="1"/>
</dbReference>
<organism>
    <name type="scientific">Mycobacterium tuberculosis (strain ATCC 25618 / H37Rv)</name>
    <dbReference type="NCBI Taxonomy" id="83332"/>
    <lineage>
        <taxon>Bacteria</taxon>
        <taxon>Bacillati</taxon>
        <taxon>Actinomycetota</taxon>
        <taxon>Actinomycetes</taxon>
        <taxon>Mycobacteriales</taxon>
        <taxon>Mycobacteriaceae</taxon>
        <taxon>Mycobacterium</taxon>
        <taxon>Mycobacterium tuberculosis complex</taxon>
    </lineage>
</organism>
<evidence type="ECO:0000250" key="1">
    <source>
        <dbReference type="UniProtKB" id="P37869"/>
    </source>
</evidence>
<evidence type="ECO:0000255" key="2">
    <source>
        <dbReference type="HAMAP-Rule" id="MF_00318"/>
    </source>
</evidence>
<evidence type="ECO:0000269" key="3">
    <source>
    </source>
</evidence>
<evidence type="ECO:0000269" key="4">
    <source>
    </source>
</evidence>
<evidence type="ECO:0000269" key="5">
    <source>
    </source>
</evidence>
<evidence type="ECO:0000269" key="6">
    <source>
    </source>
</evidence>
<evidence type="ECO:0000269" key="7">
    <source>
    </source>
</evidence>
<evidence type="ECO:0000269" key="8">
    <source>
    </source>
</evidence>
<evidence type="ECO:0000269" key="9">
    <source>
    </source>
</evidence>
<evidence type="ECO:0000305" key="10">
    <source>
    </source>
</evidence>
<evidence type="ECO:0000305" key="11">
    <source>
    </source>
</evidence>
<evidence type="ECO:0000305" key="12">
    <source>
    </source>
</evidence>
<evidence type="ECO:0000305" key="13">
    <source>
    </source>
</evidence>
<evidence type="ECO:0000312" key="14">
    <source>
        <dbReference type="PDB" id="6L7D"/>
    </source>
</evidence>
<evidence type="ECO:0000312" key="15">
    <source>
        <dbReference type="PDB" id="7CKP"/>
    </source>
</evidence>
<evidence type="ECO:0000312" key="16">
    <source>
        <dbReference type="PDB" id="7CLK"/>
    </source>
</evidence>
<evidence type="ECO:0000312" key="17">
    <source>
        <dbReference type="PDB" id="7CLL"/>
    </source>
</evidence>
<evidence type="ECO:0000312" key="18">
    <source>
        <dbReference type="PDB" id="7DLR"/>
    </source>
</evidence>
<evidence type="ECO:0000312" key="19">
    <source>
        <dbReference type="PDB" id="7E4F"/>
    </source>
</evidence>
<evidence type="ECO:0000312" key="20">
    <source>
        <dbReference type="PDB" id="7E4X"/>
    </source>
</evidence>
<evidence type="ECO:0000312" key="21">
    <source>
        <dbReference type="PDB" id="7E51"/>
    </source>
</evidence>
<evidence type="ECO:0007744" key="22">
    <source>
        <dbReference type="PDB" id="6L7D"/>
    </source>
</evidence>
<evidence type="ECO:0007744" key="23">
    <source>
        <dbReference type="PDB" id="7CKP"/>
    </source>
</evidence>
<evidence type="ECO:0007744" key="24">
    <source>
        <dbReference type="PDB" id="7CLK"/>
    </source>
</evidence>
<evidence type="ECO:0007744" key="25">
    <source>
        <dbReference type="PDB" id="7CLL"/>
    </source>
</evidence>
<evidence type="ECO:0007744" key="26">
    <source>
        <dbReference type="PDB" id="7DLR"/>
    </source>
</evidence>
<evidence type="ECO:0007744" key="27">
    <source>
        <dbReference type="PDB" id="7E4F"/>
    </source>
</evidence>
<evidence type="ECO:0007829" key="28">
    <source>
        <dbReference type="PDB" id="7CLK"/>
    </source>
</evidence>
<evidence type="ECO:0007829" key="29">
    <source>
        <dbReference type="PDB" id="7CLL"/>
    </source>
</evidence>
<evidence type="ECO:0007829" key="30">
    <source>
        <dbReference type="PDB" id="7E4X"/>
    </source>
</evidence>
<reference key="1">
    <citation type="journal article" date="1998" name="Nature">
        <title>Deciphering the biology of Mycobacterium tuberculosis from the complete genome sequence.</title>
        <authorList>
            <person name="Cole S.T."/>
            <person name="Brosch R."/>
            <person name="Parkhill J."/>
            <person name="Garnier T."/>
            <person name="Churcher C.M."/>
            <person name="Harris D.E."/>
            <person name="Gordon S.V."/>
            <person name="Eiglmeier K."/>
            <person name="Gas S."/>
            <person name="Barry C.E. III"/>
            <person name="Tekaia F."/>
            <person name="Badcock K."/>
            <person name="Basham D."/>
            <person name="Brown D."/>
            <person name="Chillingworth T."/>
            <person name="Connor R."/>
            <person name="Davies R.M."/>
            <person name="Devlin K."/>
            <person name="Feltwell T."/>
            <person name="Gentles S."/>
            <person name="Hamlin N."/>
            <person name="Holroyd S."/>
            <person name="Hornsby T."/>
            <person name="Jagels K."/>
            <person name="Krogh A."/>
            <person name="McLean J."/>
            <person name="Moule S."/>
            <person name="Murphy L.D."/>
            <person name="Oliver S."/>
            <person name="Osborne J."/>
            <person name="Quail M.A."/>
            <person name="Rajandream M.A."/>
            <person name="Rogers J."/>
            <person name="Rutter S."/>
            <person name="Seeger K."/>
            <person name="Skelton S."/>
            <person name="Squares S."/>
            <person name="Squares R."/>
            <person name="Sulston J.E."/>
            <person name="Taylor K."/>
            <person name="Whitehead S."/>
            <person name="Barrell B.G."/>
        </authorList>
    </citation>
    <scope>NUCLEOTIDE SEQUENCE [LARGE SCALE GENOMIC DNA]</scope>
    <source>
        <strain>ATCC 25618 / H37Rv</strain>
    </source>
</reference>
<reference key="2">
    <citation type="journal article" date="2011" name="Mol. Cell. Proteomics">
        <title>Proteogenomic analysis of Mycobacterium tuberculosis by high resolution mass spectrometry.</title>
        <authorList>
            <person name="Kelkar D.S."/>
            <person name="Kumar D."/>
            <person name="Kumar P."/>
            <person name="Balakrishnan L."/>
            <person name="Muthusamy B."/>
            <person name="Yadav A.K."/>
            <person name="Shrivastava P."/>
            <person name="Marimuthu A."/>
            <person name="Anand S."/>
            <person name="Sundaram H."/>
            <person name="Kingsbury R."/>
            <person name="Harsha H.C."/>
            <person name="Nair B."/>
            <person name="Prasad T.S."/>
            <person name="Chauhan D.S."/>
            <person name="Katoch K."/>
            <person name="Katoch V.M."/>
            <person name="Kumar P."/>
            <person name="Chaerkady R."/>
            <person name="Ramachandran S."/>
            <person name="Dash D."/>
            <person name="Pandey A."/>
        </authorList>
    </citation>
    <scope>IDENTIFICATION BY MASS SPECTROMETRY [LARGE SCALE ANALYSIS]</scope>
    <source>
        <strain>ATCC 25618 / H37Rv</strain>
    </source>
</reference>
<reference key="3">
    <citation type="journal article" date="2003" name="Proc. Natl. Acad. Sci. U.S.A.">
        <title>Genetic requirements for mycobacterial survival during infection.</title>
        <authorList>
            <person name="Sassetti C.M."/>
            <person name="Rubin E.J."/>
        </authorList>
    </citation>
    <scope>DISRUPTION PHENOTYPE</scope>
    <source>
        <strain>ATCC 25618 / H37Rv</strain>
    </source>
</reference>
<reference key="4">
    <citation type="journal article" date="2017" name="MBio">
        <title>Comprehensive essentiality analysis of the Mycobacterium tuberculosis genome via saturating transposon mutagenesis.</title>
        <authorList>
            <person name="DeJesus M.A."/>
            <person name="Gerrick E.R."/>
            <person name="Xu W."/>
            <person name="Park S.W."/>
            <person name="Long J.E."/>
            <person name="Boutte C.C."/>
            <person name="Rubin E.J."/>
            <person name="Schnappinger D."/>
            <person name="Ehrt S."/>
            <person name="Fortune S.M."/>
            <person name="Sassetti C.M."/>
            <person name="Ioerger T.R."/>
        </authorList>
    </citation>
    <scope>DISRUPTION PHENOTYPE</scope>
    <source>
        <strain>ATCC 25618 / H37Rv</strain>
    </source>
</reference>
<reference key="5">
    <citation type="journal article" date="2017" name="Biochim. Biophys. Acta">
        <title>Enolase of Mycobacterium tuberculosis is a surface exposed plasminogen binding protein.</title>
        <authorList>
            <person name="Rahi A."/>
            <person name="Matta S.K."/>
            <person name="Dhiman A."/>
            <person name="Garhyan J."/>
            <person name="Gopalani M."/>
            <person name="Chandra S."/>
            <person name="Bhatnagar R."/>
        </authorList>
    </citation>
    <scope>FUNCTION</scope>
    <scope>CATALYTIC ACTIVITY</scope>
    <scope>BIOPHYSICOCHEMICAL PROPERTIES</scope>
    <scope>SUBCELLULAR LOCATION</scope>
    <scope>PLASMINOGEN-BINDING</scope>
    <scope>MUTAGENESIS OF LYS-429</scope>
    <source>
        <strain>ATCC 25618 / H37Rv</strain>
    </source>
</reference>
<reference key="6">
    <citation type="journal article" date="2018" name="Front. Microbiol.">
        <title>Identification of Enolase as the Target of 2-Aminothiazoles in Mycobacterium tuberculosis.</title>
        <authorList>
            <person name="Wescott H.H."/>
            <person name="Zuniga E.S."/>
            <person name="Bajpai A."/>
            <person name="Trujillo C."/>
            <person name="Ehrt S."/>
            <person name="Schnappinger D."/>
            <person name="Roberts D.M."/>
            <person name="Parish T."/>
        </authorList>
    </citation>
    <scope>PROBABLE TARGET OF 2-AMINOTHIAZOLE ANTIBIOTICS</scope>
    <source>
        <strain>ATCC 25618 / H37Rv</strain>
        <strain>ATCC 35801 / TMC 107 / Erdman</strain>
    </source>
</reference>
<reference key="7">
    <citation type="journal article" date="2019" name="Nucleic Acids Res.">
        <title>Proteomic and transcriptomic experiments reveal an essential role of RNA degradosome complexes in shaping the transcriptome of Mycobacterium tuberculosis.</title>
        <authorList>
            <person name="Plocinski P."/>
            <person name="Macios M."/>
            <person name="Houghton J."/>
            <person name="Niemiec E."/>
            <person name="Plocinska R."/>
            <person name="Brzostek A."/>
            <person name="Slomka M."/>
            <person name="Dziadek J."/>
            <person name="Young D."/>
            <person name="Dziembowski A."/>
        </authorList>
    </citation>
    <scope>NOT PART OF RNA DEGRADOSOME</scope>
    <source>
        <strain>ATCC 25618 / H37Rv</strain>
    </source>
</reference>
<reference key="8">
    <citation type="journal article" date="2023" name="Biochimie">
        <title>Mycobacterium tuberculosis H37Rv enolase (Rv1023)- expression, characterization and effect of host dependent modifications on protein functionality.</title>
        <authorList>
            <person name="Kumar A."/>
            <person name="Boradia V.M."/>
            <person name="Mahajan A."/>
            <person name="Kumaran S."/>
            <person name="Raje M."/>
            <person name="Raje C.I."/>
        </authorList>
    </citation>
    <scope>FUNCTION</scope>
    <scope>CATALYTIC ACTIVITY</scope>
    <scope>COFACTOR</scope>
    <scope>ACTIVITY REGULATION</scope>
    <scope>BIOPHYSICOCHEMICAL PROPERTIES</scope>
    <scope>SUBUNIT</scope>
    <scope>SUBCELLULAR LOCATION</scope>
    <scope>ACETYLATION AT LYS-102</scope>
    <scope>METHYLATION AT GLU-45; GLU-47; GLU-50; ASP-72; GLU-73; ASP-90; ASP-123; GLU-126; GLU-195; ASP-203; GLU-204; ASP-210; GLU-367; GLU-369; ASP-370; ASP-375; GLU-406 AND GLU-407</scope>
    <scope>PHOSPHORYLATION AT SER-198; THR-199 AND THR-341</scope>
    <source>
        <strain>ATCC 25618 / H37Rv</strain>
    </source>
</reference>
<reference evidence="14 15 16 17 18 19 20 21" key="9">
    <citation type="journal article" date="2023" name="IUCrJ">
        <title>Structural snapshots of Mycobacterium tuberculosis enolase reveal dual mode of 2PG binding and its implication in enzyme catalysis.</title>
        <authorList>
            <person name="Ahmad M."/>
            <person name="Jha B."/>
            <person name="Bose S."/>
            <person name="Tiwari S."/>
            <person name="Dwivedy A."/>
            <person name="Kar D."/>
            <person name="Pal R."/>
            <person name="Mariadasse R."/>
            <person name="Parish T."/>
            <person name="Jeyakanthan J."/>
            <person name="Vinothkumar K.R."/>
            <person name="Biswal B.K."/>
        </authorList>
    </citation>
    <scope>X-RAY CRYSTALLOGRAPHY (1.99 ANGSTROMS) IN COMPLEX WITH MG(2+) ALONE OR WITH PHOSPHOENOLPYRUVATE OR 2-PHOSPHOGLYCERIC ACID</scope>
    <scope>STRUCTURE BY ELECTRON MICROSCOPY (3.08 ANGSTROMS)</scope>
    <scope>FUNCTION</scope>
    <scope>CATALYTIC ACTIVITY</scope>
    <scope>REACTION MECHANISM</scope>
    <scope>COFACTOR</scope>
    <scope>BIOPHYSICOCHEMICAL PROPERTIES</scope>
    <scope>SUBUNIT</scope>
    <scope>DOMAIN</scope>
    <scope>MUTAGENESIS OF SER-42; GLU-163; GLU-204; ASP-241 AND LYS-335</scope>
    <source>
        <strain>ATCC 25618 / H37Rv</strain>
    </source>
</reference>